<dbReference type="EC" id="1.1.1.17" evidence="1"/>
<dbReference type="EMBL" id="Y09927">
    <property type="protein sequence ID" value="CAB55330.1"/>
    <property type="molecule type" value="Genomic_DNA"/>
</dbReference>
<dbReference type="EMBL" id="CP000046">
    <property type="protein sequence ID" value="AAW38457.1"/>
    <property type="molecule type" value="Genomic_DNA"/>
</dbReference>
<dbReference type="RefSeq" id="WP_000648718.1">
    <property type="nucleotide sequence ID" value="NZ_JBGOFO010000007.1"/>
</dbReference>
<dbReference type="SMR" id="Q9RL68"/>
<dbReference type="KEGG" id="sac:SACOL2149"/>
<dbReference type="HOGENOM" id="CLU_036089_2_0_9"/>
<dbReference type="Proteomes" id="UP000000530">
    <property type="component" value="Chromosome"/>
</dbReference>
<dbReference type="GO" id="GO:0005829">
    <property type="term" value="C:cytosol"/>
    <property type="evidence" value="ECO:0007669"/>
    <property type="project" value="TreeGrafter"/>
</dbReference>
<dbReference type="GO" id="GO:0008926">
    <property type="term" value="F:mannitol-1-phosphate 5-dehydrogenase activity"/>
    <property type="evidence" value="ECO:0007669"/>
    <property type="project" value="UniProtKB-UniRule"/>
</dbReference>
<dbReference type="GO" id="GO:0019592">
    <property type="term" value="P:mannitol catabolic process"/>
    <property type="evidence" value="ECO:0007669"/>
    <property type="project" value="TreeGrafter"/>
</dbReference>
<dbReference type="FunFam" id="3.40.50.720:FF:000316">
    <property type="entry name" value="Mannitol-1-phosphate 5-dehydrogenase"/>
    <property type="match status" value="1"/>
</dbReference>
<dbReference type="Gene3D" id="1.10.1040.10">
    <property type="entry name" value="N-(1-d-carboxylethyl)-l-norvaline Dehydrogenase, domain 2"/>
    <property type="match status" value="1"/>
</dbReference>
<dbReference type="Gene3D" id="3.40.50.720">
    <property type="entry name" value="NAD(P)-binding Rossmann-like Domain"/>
    <property type="match status" value="1"/>
</dbReference>
<dbReference type="HAMAP" id="MF_00196">
    <property type="entry name" value="Mannitol_dehydrog"/>
    <property type="match status" value="1"/>
</dbReference>
<dbReference type="InterPro" id="IPR008927">
    <property type="entry name" value="6-PGluconate_DH-like_C_sf"/>
</dbReference>
<dbReference type="InterPro" id="IPR013328">
    <property type="entry name" value="6PGD_dom2"/>
</dbReference>
<dbReference type="InterPro" id="IPR023028">
    <property type="entry name" value="Mannitol_1_phos_5_DH"/>
</dbReference>
<dbReference type="InterPro" id="IPR000669">
    <property type="entry name" value="Mannitol_DH"/>
</dbReference>
<dbReference type="InterPro" id="IPR013118">
    <property type="entry name" value="Mannitol_DH_C"/>
</dbReference>
<dbReference type="InterPro" id="IPR023027">
    <property type="entry name" value="Mannitol_DH_CS"/>
</dbReference>
<dbReference type="InterPro" id="IPR013131">
    <property type="entry name" value="Mannitol_DH_N"/>
</dbReference>
<dbReference type="InterPro" id="IPR036291">
    <property type="entry name" value="NAD(P)-bd_dom_sf"/>
</dbReference>
<dbReference type="NCBIfam" id="NF002645">
    <property type="entry name" value="PRK02318.1-1"/>
    <property type="match status" value="1"/>
</dbReference>
<dbReference type="NCBIfam" id="NF002652">
    <property type="entry name" value="PRK02318.2-5"/>
    <property type="match status" value="1"/>
</dbReference>
<dbReference type="PANTHER" id="PTHR30524:SF0">
    <property type="entry name" value="ALTRONATE OXIDOREDUCTASE-RELATED"/>
    <property type="match status" value="1"/>
</dbReference>
<dbReference type="PANTHER" id="PTHR30524">
    <property type="entry name" value="MANNITOL-1-PHOSPHATE 5-DEHYDROGENASE"/>
    <property type="match status" value="1"/>
</dbReference>
<dbReference type="Pfam" id="PF01232">
    <property type="entry name" value="Mannitol_dh"/>
    <property type="match status" value="1"/>
</dbReference>
<dbReference type="Pfam" id="PF08125">
    <property type="entry name" value="Mannitol_dh_C"/>
    <property type="match status" value="1"/>
</dbReference>
<dbReference type="PRINTS" id="PR00084">
    <property type="entry name" value="MTLDHDRGNASE"/>
</dbReference>
<dbReference type="SUPFAM" id="SSF48179">
    <property type="entry name" value="6-phosphogluconate dehydrogenase C-terminal domain-like"/>
    <property type="match status" value="1"/>
</dbReference>
<dbReference type="SUPFAM" id="SSF51735">
    <property type="entry name" value="NAD(P)-binding Rossmann-fold domains"/>
    <property type="match status" value="1"/>
</dbReference>
<dbReference type="PROSITE" id="PS00974">
    <property type="entry name" value="MANNITOL_DHGENASE"/>
    <property type="match status" value="1"/>
</dbReference>
<proteinExistence type="inferred from homology"/>
<sequence>MKAVHFGAGNIGRGFIGYILADNNVKVTFADVNEEIINALAHDHQYDVILADESKTTTRVNNVDAINSMQPSEALKQAILEADIITTAVGVNILPIIAKSFAPFLKEKTNHVNIVACENAIMATDTLKKAVLDITGPLGNNIHFANSAVDRIVPLQKNENILDVMVEPFYEWVVEKDAWYGPELNHIKYVDDLTPYIERKLLTVNTGHAYLAYAGKFAGKATVLDAVEDSSIEAGLRRVLAETSQYITNEFDFTEAEQAAYVEKIIDRFNNSYLSDEVTRVGRGTLRKIGPKDRIIKPLTYLYNKDLERTGLLNTAALLLKYDDTADQETVEKNNYIKEHGLKAFLSEYAKVDDGLADEIIEAYNSLS</sequence>
<gene>
    <name evidence="1" type="primary">mtlD</name>
    <name type="ordered locus">SACOL2149</name>
</gene>
<protein>
    <recommendedName>
        <fullName evidence="1">Mannitol-1-phosphate 5-dehydrogenase</fullName>
        <ecNumber evidence="1">1.1.1.17</ecNumber>
    </recommendedName>
</protein>
<feature type="chain" id="PRO_0000170719" description="Mannitol-1-phosphate 5-dehydrogenase">
    <location>
        <begin position="1"/>
        <end position="368"/>
    </location>
</feature>
<feature type="binding site" evidence="1">
    <location>
        <begin position="3"/>
        <end position="14"/>
    </location>
    <ligand>
        <name>NAD(+)</name>
        <dbReference type="ChEBI" id="CHEBI:57540"/>
    </ligand>
</feature>
<comment type="catalytic activity">
    <reaction evidence="1">
        <text>D-mannitol 1-phosphate + NAD(+) = beta-D-fructose 6-phosphate + NADH + H(+)</text>
        <dbReference type="Rhea" id="RHEA:19661"/>
        <dbReference type="ChEBI" id="CHEBI:15378"/>
        <dbReference type="ChEBI" id="CHEBI:57540"/>
        <dbReference type="ChEBI" id="CHEBI:57634"/>
        <dbReference type="ChEBI" id="CHEBI:57945"/>
        <dbReference type="ChEBI" id="CHEBI:61381"/>
        <dbReference type="EC" id="1.1.1.17"/>
    </reaction>
</comment>
<comment type="similarity">
    <text evidence="1">Belongs to the mannitol dehydrogenase family.</text>
</comment>
<name>MTLD_STAAC</name>
<evidence type="ECO:0000255" key="1">
    <source>
        <dbReference type="HAMAP-Rule" id="MF_00196"/>
    </source>
</evidence>
<accession>Q9RL68</accession>
<keyword id="KW-0520">NAD</keyword>
<keyword id="KW-0560">Oxidoreductase</keyword>
<reference key="1">
    <citation type="journal article" date="1999" name="Microb. Drug Resist.">
        <title>Mrp -- a new auxiliary gene essential for optimal expression of methicillin resistance in Staphylococcus aureus.</title>
        <authorList>
            <person name="Wu S.-W."/>
            <person name="de Lencastre H."/>
        </authorList>
    </citation>
    <scope>NUCLEOTIDE SEQUENCE [GENOMIC DNA]</scope>
</reference>
<reference key="2">
    <citation type="journal article" date="2005" name="J. Bacteriol.">
        <title>Insights on evolution of virulence and resistance from the complete genome analysis of an early methicillin-resistant Staphylococcus aureus strain and a biofilm-producing methicillin-resistant Staphylococcus epidermidis strain.</title>
        <authorList>
            <person name="Gill S.R."/>
            <person name="Fouts D.E."/>
            <person name="Archer G.L."/>
            <person name="Mongodin E.F."/>
            <person name="DeBoy R.T."/>
            <person name="Ravel J."/>
            <person name="Paulsen I.T."/>
            <person name="Kolonay J.F."/>
            <person name="Brinkac L.M."/>
            <person name="Beanan M.J."/>
            <person name="Dodson R.J."/>
            <person name="Daugherty S.C."/>
            <person name="Madupu R."/>
            <person name="Angiuoli S.V."/>
            <person name="Durkin A.S."/>
            <person name="Haft D.H."/>
            <person name="Vamathevan J.J."/>
            <person name="Khouri H."/>
            <person name="Utterback T.R."/>
            <person name="Lee C."/>
            <person name="Dimitrov G."/>
            <person name="Jiang L."/>
            <person name="Qin H."/>
            <person name="Weidman J."/>
            <person name="Tran K."/>
            <person name="Kang K.H."/>
            <person name="Hance I.R."/>
            <person name="Nelson K.E."/>
            <person name="Fraser C.M."/>
        </authorList>
    </citation>
    <scope>NUCLEOTIDE SEQUENCE [LARGE SCALE GENOMIC DNA]</scope>
    <source>
        <strain>COL</strain>
    </source>
</reference>
<organism>
    <name type="scientific">Staphylococcus aureus (strain COL)</name>
    <dbReference type="NCBI Taxonomy" id="93062"/>
    <lineage>
        <taxon>Bacteria</taxon>
        <taxon>Bacillati</taxon>
        <taxon>Bacillota</taxon>
        <taxon>Bacilli</taxon>
        <taxon>Bacillales</taxon>
        <taxon>Staphylococcaceae</taxon>
        <taxon>Staphylococcus</taxon>
    </lineage>
</organism>